<keyword id="KW-0028">Amino-acid biosynthesis</keyword>
<keyword id="KW-0057">Aromatic amino acid biosynthesis</keyword>
<keyword id="KW-0520">NAD</keyword>
<keyword id="KW-0560">Oxidoreductase</keyword>
<name>DHQS_METMA</name>
<accession>Q8PXE8</accession>
<sequence>MKKKSVWIKADEGGWEEQKERITTGLESGADCVLVNPGDVEKVRELGNITVAAFARDNKSGADIVVVGKRGEGDGTKPLPQEIPGSFDVNAATLLTDKGVTVGGYVVIKDRSYERFAAEMGKICDYLLVTGTDWKVIPLENLIADLQREKVKIIFGVKSAEEARLAFQTLETGADGVLLDSGNPQEIKDTIKAARELESESTELESAVVTRVEPLGMGDRVCVDTCNLMQRGEGMLIGSQASGMFLVNSESDDSPYVAARPFRVNAGAVHSYIKIGDKTRYLSELQAGDSVTIIDSRGKQREGIVGRIKIESRPLMLIEAKAGDRTLTAILQNAETIKLVGKGGTPISVAKLKKGDEVLVRLEEGARHFGKKIEETIIEK</sequence>
<organism>
    <name type="scientific">Methanosarcina mazei (strain ATCC BAA-159 / DSM 3647 / Goe1 / Go1 / JCM 11833 / OCM 88)</name>
    <name type="common">Methanosarcina frisia</name>
    <dbReference type="NCBI Taxonomy" id="192952"/>
    <lineage>
        <taxon>Archaea</taxon>
        <taxon>Methanobacteriati</taxon>
        <taxon>Methanobacteriota</taxon>
        <taxon>Stenosarchaea group</taxon>
        <taxon>Methanomicrobia</taxon>
        <taxon>Methanosarcinales</taxon>
        <taxon>Methanosarcinaceae</taxon>
        <taxon>Methanosarcina</taxon>
    </lineage>
</organism>
<comment type="function">
    <text evidence="1">Catalyzes the oxidative deamination and cyclization of 2-amino-3,7-dideoxy-D-threo-hept-6-ulosonic acid (ADH) to yield 3-dehydroquinate (DHQ), which is fed into the canonical shikimic pathway of aromatic amino acid biosynthesis.</text>
</comment>
<comment type="catalytic activity">
    <reaction evidence="1">
        <text>2-amino-2,3,7-trideoxy-D-lyxo-hept-6-ulosonate + NAD(+) + H2O = 3-dehydroquinate + NH4(+) + NADH + H(+)</text>
        <dbReference type="Rhea" id="RHEA:25956"/>
        <dbReference type="ChEBI" id="CHEBI:15377"/>
        <dbReference type="ChEBI" id="CHEBI:15378"/>
        <dbReference type="ChEBI" id="CHEBI:28938"/>
        <dbReference type="ChEBI" id="CHEBI:32364"/>
        <dbReference type="ChEBI" id="CHEBI:57540"/>
        <dbReference type="ChEBI" id="CHEBI:57945"/>
        <dbReference type="ChEBI" id="CHEBI:58859"/>
        <dbReference type="EC" id="1.4.1.24"/>
    </reaction>
</comment>
<comment type="similarity">
    <text evidence="1">Belongs to the archaeal-type DHQ synthase family.</text>
</comment>
<gene>
    <name evidence="1" type="primary">aroB'</name>
    <name type="ordered locus">MM_1272</name>
</gene>
<dbReference type="EC" id="1.4.1.24" evidence="1"/>
<dbReference type="EMBL" id="AE008384">
    <property type="protein sequence ID" value="AAM30968.1"/>
    <property type="molecule type" value="Genomic_DNA"/>
</dbReference>
<dbReference type="RefSeq" id="WP_011033219.1">
    <property type="nucleotide sequence ID" value="NC_003901.1"/>
</dbReference>
<dbReference type="KEGG" id="mma:MM_1272"/>
<dbReference type="PATRIC" id="fig|192952.21.peg.1479"/>
<dbReference type="eggNOG" id="arCOG04353">
    <property type="taxonomic scope" value="Archaea"/>
</dbReference>
<dbReference type="HOGENOM" id="CLU_056379_0_0_2"/>
<dbReference type="Proteomes" id="UP000000595">
    <property type="component" value="Chromosome"/>
</dbReference>
<dbReference type="GO" id="GO:0003856">
    <property type="term" value="F:3-dehydroquinate synthase activity"/>
    <property type="evidence" value="ECO:0007669"/>
    <property type="project" value="InterPro"/>
</dbReference>
<dbReference type="GO" id="GO:0102042">
    <property type="term" value="F:dehydroquinate synthase activity"/>
    <property type="evidence" value="ECO:0007669"/>
    <property type="project" value="UniProtKB-EC"/>
</dbReference>
<dbReference type="GO" id="GO:0051287">
    <property type="term" value="F:NAD binding"/>
    <property type="evidence" value="ECO:0007669"/>
    <property type="project" value="UniProtKB-UniRule"/>
</dbReference>
<dbReference type="GO" id="GO:0008652">
    <property type="term" value="P:amino acid biosynthetic process"/>
    <property type="evidence" value="ECO:0007669"/>
    <property type="project" value="UniProtKB-KW"/>
</dbReference>
<dbReference type="GO" id="GO:0009073">
    <property type="term" value="P:aromatic amino acid family biosynthetic process"/>
    <property type="evidence" value="ECO:0007669"/>
    <property type="project" value="UniProtKB-UniRule"/>
</dbReference>
<dbReference type="HAMAP" id="MF_01244">
    <property type="entry name" value="Arch_DHQ_synthase"/>
    <property type="match status" value="1"/>
</dbReference>
<dbReference type="InterPro" id="IPR002812">
    <property type="entry name" value="DHQ_synth"/>
</dbReference>
<dbReference type="NCBIfam" id="NF002626">
    <property type="entry name" value="PRK02290.1-4"/>
    <property type="match status" value="1"/>
</dbReference>
<dbReference type="PANTHER" id="PTHR33563">
    <property type="match status" value="1"/>
</dbReference>
<dbReference type="PANTHER" id="PTHR33563:SF1">
    <property type="entry name" value="3-DEHYDROQUINATE SYNTHASE"/>
    <property type="match status" value="1"/>
</dbReference>
<dbReference type="Pfam" id="PF01959">
    <property type="entry name" value="DHQS"/>
    <property type="match status" value="1"/>
</dbReference>
<dbReference type="PIRSF" id="PIRSF006655">
    <property type="entry name" value="DHQ_synth"/>
    <property type="match status" value="1"/>
</dbReference>
<protein>
    <recommendedName>
        <fullName evidence="1">3-dehydroquinate synthase</fullName>
        <shortName evidence="1">DHQ synthase</shortName>
        <ecNumber evidence="1">1.4.1.24</ecNumber>
    </recommendedName>
    <alternativeName>
        <fullName evidence="1">3-dehydroquinate synthase II</fullName>
    </alternativeName>
</protein>
<feature type="chain" id="PRO_0000058771" description="3-dehydroquinate synthase">
    <location>
        <begin position="1"/>
        <end position="380"/>
    </location>
</feature>
<reference key="1">
    <citation type="journal article" date="2002" name="J. Mol. Microbiol. Biotechnol.">
        <title>The genome of Methanosarcina mazei: evidence for lateral gene transfer between Bacteria and Archaea.</title>
        <authorList>
            <person name="Deppenmeier U."/>
            <person name="Johann A."/>
            <person name="Hartsch T."/>
            <person name="Merkl R."/>
            <person name="Schmitz R.A."/>
            <person name="Martinez-Arias R."/>
            <person name="Henne A."/>
            <person name="Wiezer A."/>
            <person name="Baeumer S."/>
            <person name="Jacobi C."/>
            <person name="Brueggemann H."/>
            <person name="Lienard T."/>
            <person name="Christmann A."/>
            <person name="Boemecke M."/>
            <person name="Steckel S."/>
            <person name="Bhattacharyya A."/>
            <person name="Lykidis A."/>
            <person name="Overbeek R."/>
            <person name="Klenk H.-P."/>
            <person name="Gunsalus R.P."/>
            <person name="Fritz H.-J."/>
            <person name="Gottschalk G."/>
        </authorList>
    </citation>
    <scope>NUCLEOTIDE SEQUENCE [LARGE SCALE GENOMIC DNA]</scope>
    <source>
        <strain>ATCC BAA-159 / DSM 3647 / Goe1 / Go1 / JCM 11833 / OCM 88</strain>
    </source>
</reference>
<evidence type="ECO:0000255" key="1">
    <source>
        <dbReference type="HAMAP-Rule" id="MF_01244"/>
    </source>
</evidence>
<proteinExistence type="inferred from homology"/>